<dbReference type="EC" id="2.4.2.17" evidence="1"/>
<dbReference type="EMBL" id="CP000010">
    <property type="protein sequence ID" value="AAU48283.1"/>
    <property type="molecule type" value="Genomic_DNA"/>
</dbReference>
<dbReference type="RefSeq" id="WP_004199915.1">
    <property type="nucleotide sequence ID" value="NC_006348.1"/>
</dbReference>
<dbReference type="RefSeq" id="YP_104236.1">
    <property type="nucleotide sequence ID" value="NC_006348.1"/>
</dbReference>
<dbReference type="SMR" id="Q62GD8"/>
<dbReference type="GeneID" id="93061757"/>
<dbReference type="KEGG" id="bma:BMA2715"/>
<dbReference type="PATRIC" id="fig|243160.12.peg.2785"/>
<dbReference type="eggNOG" id="COG0040">
    <property type="taxonomic scope" value="Bacteria"/>
</dbReference>
<dbReference type="HOGENOM" id="CLU_038115_2_0_4"/>
<dbReference type="UniPathway" id="UPA00031">
    <property type="reaction ID" value="UER00006"/>
</dbReference>
<dbReference type="Proteomes" id="UP000006693">
    <property type="component" value="Chromosome 1"/>
</dbReference>
<dbReference type="GO" id="GO:0005737">
    <property type="term" value="C:cytoplasm"/>
    <property type="evidence" value="ECO:0007669"/>
    <property type="project" value="UniProtKB-SubCell"/>
</dbReference>
<dbReference type="GO" id="GO:0005524">
    <property type="term" value="F:ATP binding"/>
    <property type="evidence" value="ECO:0007669"/>
    <property type="project" value="UniProtKB-KW"/>
</dbReference>
<dbReference type="GO" id="GO:0003879">
    <property type="term" value="F:ATP phosphoribosyltransferase activity"/>
    <property type="evidence" value="ECO:0007669"/>
    <property type="project" value="UniProtKB-UniRule"/>
</dbReference>
<dbReference type="GO" id="GO:0000105">
    <property type="term" value="P:L-histidine biosynthetic process"/>
    <property type="evidence" value="ECO:0007669"/>
    <property type="project" value="UniProtKB-UniRule"/>
</dbReference>
<dbReference type="CDD" id="cd13595">
    <property type="entry name" value="PBP2_HisGs"/>
    <property type="match status" value="1"/>
</dbReference>
<dbReference type="FunFam" id="3.40.190.10:FF:000011">
    <property type="entry name" value="ATP phosphoribosyltransferase"/>
    <property type="match status" value="1"/>
</dbReference>
<dbReference type="Gene3D" id="3.40.190.10">
    <property type="entry name" value="Periplasmic binding protein-like II"/>
    <property type="match status" value="2"/>
</dbReference>
<dbReference type="HAMAP" id="MF_01018">
    <property type="entry name" value="HisG_Short"/>
    <property type="match status" value="1"/>
</dbReference>
<dbReference type="InterPro" id="IPR013820">
    <property type="entry name" value="ATP_PRibTrfase_cat"/>
</dbReference>
<dbReference type="InterPro" id="IPR018198">
    <property type="entry name" value="ATP_PRibTrfase_CS"/>
</dbReference>
<dbReference type="InterPro" id="IPR001348">
    <property type="entry name" value="ATP_PRibTrfase_HisG"/>
</dbReference>
<dbReference type="InterPro" id="IPR024893">
    <property type="entry name" value="ATP_PRibTrfase_HisG_short"/>
</dbReference>
<dbReference type="NCBIfam" id="TIGR00070">
    <property type="entry name" value="hisG"/>
    <property type="match status" value="1"/>
</dbReference>
<dbReference type="PANTHER" id="PTHR21403:SF8">
    <property type="entry name" value="ATP PHOSPHORIBOSYLTRANSFERASE"/>
    <property type="match status" value="1"/>
</dbReference>
<dbReference type="PANTHER" id="PTHR21403">
    <property type="entry name" value="ATP PHOSPHORIBOSYLTRANSFERASE ATP-PRTASE"/>
    <property type="match status" value="1"/>
</dbReference>
<dbReference type="Pfam" id="PF01634">
    <property type="entry name" value="HisG"/>
    <property type="match status" value="1"/>
</dbReference>
<dbReference type="SUPFAM" id="SSF53850">
    <property type="entry name" value="Periplasmic binding protein-like II"/>
    <property type="match status" value="1"/>
</dbReference>
<dbReference type="PROSITE" id="PS01316">
    <property type="entry name" value="ATP_P_PHORIBOSYLTR"/>
    <property type="match status" value="1"/>
</dbReference>
<feature type="chain" id="PRO_0000229309" description="ATP phosphoribosyltransferase">
    <location>
        <begin position="1"/>
        <end position="218"/>
    </location>
</feature>
<gene>
    <name evidence="1" type="primary">hisG</name>
    <name type="ordered locus">BMA2715</name>
</gene>
<proteinExistence type="inferred from homology"/>
<reference key="1">
    <citation type="journal article" date="2004" name="Proc. Natl. Acad. Sci. U.S.A.">
        <title>Structural flexibility in the Burkholderia mallei genome.</title>
        <authorList>
            <person name="Nierman W.C."/>
            <person name="DeShazer D."/>
            <person name="Kim H.S."/>
            <person name="Tettelin H."/>
            <person name="Nelson K.E."/>
            <person name="Feldblyum T.V."/>
            <person name="Ulrich R.L."/>
            <person name="Ronning C.M."/>
            <person name="Brinkac L.M."/>
            <person name="Daugherty S.C."/>
            <person name="Davidsen T.D."/>
            <person name="DeBoy R.T."/>
            <person name="Dimitrov G."/>
            <person name="Dodson R.J."/>
            <person name="Durkin A.S."/>
            <person name="Gwinn M.L."/>
            <person name="Haft D.H."/>
            <person name="Khouri H.M."/>
            <person name="Kolonay J.F."/>
            <person name="Madupu R."/>
            <person name="Mohammoud Y."/>
            <person name="Nelson W.C."/>
            <person name="Radune D."/>
            <person name="Romero C.M."/>
            <person name="Sarria S."/>
            <person name="Selengut J."/>
            <person name="Shamblin C."/>
            <person name="Sullivan S.A."/>
            <person name="White O."/>
            <person name="Yu Y."/>
            <person name="Zafar N."/>
            <person name="Zhou L."/>
            <person name="Fraser C.M."/>
        </authorList>
    </citation>
    <scope>NUCLEOTIDE SEQUENCE [LARGE SCALE GENOMIC DNA]</scope>
    <source>
        <strain>ATCC 23344</strain>
    </source>
</reference>
<keyword id="KW-0028">Amino-acid biosynthesis</keyword>
<keyword id="KW-0067">ATP-binding</keyword>
<keyword id="KW-0963">Cytoplasm</keyword>
<keyword id="KW-0328">Glycosyltransferase</keyword>
<keyword id="KW-0368">Histidine biosynthesis</keyword>
<keyword id="KW-0547">Nucleotide-binding</keyword>
<keyword id="KW-1185">Reference proteome</keyword>
<keyword id="KW-0808">Transferase</keyword>
<protein>
    <recommendedName>
        <fullName evidence="1">ATP phosphoribosyltransferase</fullName>
        <shortName evidence="1">ATP-PRT</shortName>
        <shortName evidence="1">ATP-PRTase</shortName>
        <ecNumber evidence="1">2.4.2.17</ecNumber>
    </recommendedName>
</protein>
<evidence type="ECO:0000255" key="1">
    <source>
        <dbReference type="HAMAP-Rule" id="MF_01018"/>
    </source>
</evidence>
<name>HIS1_BURMA</name>
<sequence length="218" mass="23067">MSAPLTLALSKGRIFEETVPLLAAAGVTVAEDPETSRKLILPTTDPNLRVIVVRATDVPTYVEYGAADFGVAGKDVLLEHGGGGLYQPIDLNIARCRMSVAVPAGFDYANAVRQGARLRVATKYVETAREHFAAKGVHVDLIKLYGSMELAPLVGLADAIVDLVSSGGTLKANNLVEVEEIMPISSRLVVNQAALKLKRAALKPFLDAFERASLGSGA</sequence>
<comment type="function">
    <text evidence="1">Catalyzes the condensation of ATP and 5-phosphoribose 1-diphosphate to form N'-(5'-phosphoribosyl)-ATP (PR-ATP). Has a crucial role in the pathway because the rate of histidine biosynthesis seems to be controlled primarily by regulation of HisG enzymatic activity.</text>
</comment>
<comment type="catalytic activity">
    <reaction evidence="1">
        <text>1-(5-phospho-beta-D-ribosyl)-ATP + diphosphate = 5-phospho-alpha-D-ribose 1-diphosphate + ATP</text>
        <dbReference type="Rhea" id="RHEA:18473"/>
        <dbReference type="ChEBI" id="CHEBI:30616"/>
        <dbReference type="ChEBI" id="CHEBI:33019"/>
        <dbReference type="ChEBI" id="CHEBI:58017"/>
        <dbReference type="ChEBI" id="CHEBI:73183"/>
        <dbReference type="EC" id="2.4.2.17"/>
    </reaction>
</comment>
<comment type="pathway">
    <text evidence="1">Amino-acid biosynthesis; L-histidine biosynthesis; L-histidine from 5-phospho-alpha-D-ribose 1-diphosphate: step 1/9.</text>
</comment>
<comment type="subunit">
    <text evidence="1">Heteromultimer composed of HisG and HisZ subunits.</text>
</comment>
<comment type="subcellular location">
    <subcellularLocation>
        <location evidence="1">Cytoplasm</location>
    </subcellularLocation>
</comment>
<comment type="domain">
    <text>Lacks the C-terminal regulatory region which is replaced by HisZ.</text>
</comment>
<comment type="similarity">
    <text evidence="1">Belongs to the ATP phosphoribosyltransferase family. Short subfamily.</text>
</comment>
<organism>
    <name type="scientific">Burkholderia mallei (strain ATCC 23344)</name>
    <dbReference type="NCBI Taxonomy" id="243160"/>
    <lineage>
        <taxon>Bacteria</taxon>
        <taxon>Pseudomonadati</taxon>
        <taxon>Pseudomonadota</taxon>
        <taxon>Betaproteobacteria</taxon>
        <taxon>Burkholderiales</taxon>
        <taxon>Burkholderiaceae</taxon>
        <taxon>Burkholderia</taxon>
        <taxon>pseudomallei group</taxon>
    </lineage>
</organism>
<accession>Q62GD8</accession>